<feature type="chain" id="PRO_0000217484" description="Probable ABC transporter permease protein ycf63">
    <location>
        <begin position="1"/>
        <end position="263"/>
    </location>
</feature>
<feature type="transmembrane region" description="Helical" evidence="2">
    <location>
        <begin position="43"/>
        <end position="63"/>
    </location>
</feature>
<feature type="transmembrane region" description="Helical" evidence="2">
    <location>
        <begin position="82"/>
        <end position="102"/>
    </location>
</feature>
<feature type="transmembrane region" description="Helical" evidence="2">
    <location>
        <begin position="136"/>
        <end position="156"/>
    </location>
</feature>
<feature type="transmembrane region" description="Helical" evidence="2">
    <location>
        <begin position="159"/>
        <end position="179"/>
    </location>
</feature>
<feature type="transmembrane region" description="Helical" evidence="2">
    <location>
        <begin position="199"/>
        <end position="219"/>
    </location>
</feature>
<feature type="transmembrane region" description="Helical" evidence="2">
    <location>
        <begin position="230"/>
        <end position="250"/>
    </location>
</feature>
<keyword id="KW-0150">Chloroplast</keyword>
<keyword id="KW-0472">Membrane</keyword>
<keyword id="KW-0934">Plastid</keyword>
<keyword id="KW-0812">Transmembrane</keyword>
<keyword id="KW-1133">Transmembrane helix</keyword>
<keyword id="KW-0813">Transport</keyword>
<gene>
    <name type="primary">ycf63</name>
</gene>
<name>YCF63_PORPU</name>
<comment type="function">
    <text evidence="1">Could be part of an ABC transporter complex.</text>
</comment>
<comment type="subcellular location">
    <subcellularLocation>
        <location evidence="3">Plastid</location>
        <location evidence="3">Chloroplast membrane</location>
        <topology evidence="3">Multi-pass membrane protein</topology>
    </subcellularLocation>
</comment>
<comment type="similarity">
    <text evidence="3">Belongs to the MlaE permease family.</text>
</comment>
<accession>P51393</accession>
<protein>
    <recommendedName>
        <fullName>Probable ABC transporter permease protein ycf63</fullName>
    </recommendedName>
</protein>
<dbReference type="EMBL" id="U38804">
    <property type="protein sequence ID" value="AAC08279.1"/>
    <property type="molecule type" value="Genomic_DNA"/>
</dbReference>
<dbReference type="PIR" id="S73314">
    <property type="entry name" value="S73314"/>
</dbReference>
<dbReference type="RefSeq" id="NP_054003.1">
    <property type="nucleotide sequence ID" value="NC_000925.1"/>
</dbReference>
<dbReference type="SMR" id="P51393"/>
<dbReference type="GO" id="GO:0043190">
    <property type="term" value="C:ATP-binding cassette (ABC) transporter complex"/>
    <property type="evidence" value="ECO:0007669"/>
    <property type="project" value="InterPro"/>
</dbReference>
<dbReference type="GO" id="GO:0031969">
    <property type="term" value="C:chloroplast membrane"/>
    <property type="evidence" value="ECO:0007669"/>
    <property type="project" value="UniProtKB-SubCell"/>
</dbReference>
<dbReference type="GO" id="GO:0005548">
    <property type="term" value="F:phospholipid transporter activity"/>
    <property type="evidence" value="ECO:0007669"/>
    <property type="project" value="TreeGrafter"/>
</dbReference>
<dbReference type="InterPro" id="IPR003453">
    <property type="entry name" value="ABC_MlaE_roteobac"/>
</dbReference>
<dbReference type="InterPro" id="IPR030802">
    <property type="entry name" value="Permease_MalE"/>
</dbReference>
<dbReference type="NCBIfam" id="TIGR00056">
    <property type="entry name" value="MlaE family lipid ABC transporter permease subunit"/>
    <property type="match status" value="1"/>
</dbReference>
<dbReference type="PANTHER" id="PTHR30188">
    <property type="entry name" value="ABC TRANSPORTER PERMEASE PROTEIN-RELATED"/>
    <property type="match status" value="1"/>
</dbReference>
<dbReference type="PANTHER" id="PTHR30188:SF4">
    <property type="entry name" value="PROTEIN TRIGALACTOSYLDIACYLGLYCEROL 1, CHLOROPLASTIC"/>
    <property type="match status" value="1"/>
</dbReference>
<dbReference type="Pfam" id="PF02405">
    <property type="entry name" value="MlaE"/>
    <property type="match status" value="1"/>
</dbReference>
<sequence length="263" mass="28343">MFQFELKKWIQKLNSTLSLFVSLLARLRTMKINTSSLAEQIYLVGPGSLNITLLTACFISMVFTMQIAKEFLHLDAASALGAVIVIAFTRELSPVLTAVIIAGKIGSSFTAEIATMETTEQIDALYLLNTNPIDYLVFPKVAACCIMLPILSTISLTASIAISIFVSFVMYGIPSSIFLKSAFLALSVSDFFSCLQKSLCFGTIIAFISCQWGLTSSGGAKGVGNSTTSSVVTILLTIFITDFILSYFMFQSTGSSIAQGNNL</sequence>
<reference key="1">
    <citation type="journal article" date="1995" name="Plant Mol. Biol. Rep.">
        <title>Complete nucleotide sequence of the Porphyra purpurea chloroplast genome.</title>
        <authorList>
            <person name="Reith M.E."/>
            <person name="Munholland J."/>
        </authorList>
    </citation>
    <scope>NUCLEOTIDE SEQUENCE [LARGE SCALE GENOMIC DNA]</scope>
    <source>
        <strain>Avonport</strain>
    </source>
</reference>
<evidence type="ECO:0000250" key="1"/>
<evidence type="ECO:0000255" key="2"/>
<evidence type="ECO:0000305" key="3"/>
<geneLocation type="chloroplast"/>
<organism>
    <name type="scientific">Porphyra purpurea</name>
    <name type="common">Red seaweed</name>
    <name type="synonym">Ulva purpurea</name>
    <dbReference type="NCBI Taxonomy" id="2787"/>
    <lineage>
        <taxon>Eukaryota</taxon>
        <taxon>Rhodophyta</taxon>
        <taxon>Bangiophyceae</taxon>
        <taxon>Bangiales</taxon>
        <taxon>Bangiaceae</taxon>
        <taxon>Porphyra</taxon>
    </lineage>
</organism>
<proteinExistence type="inferred from homology"/>